<reference key="1">
    <citation type="journal article" date="2001" name="Nature">
        <title>Genome sequence of enterohaemorrhagic Escherichia coli O157:H7.</title>
        <authorList>
            <person name="Perna N.T."/>
            <person name="Plunkett G. III"/>
            <person name="Burland V."/>
            <person name="Mau B."/>
            <person name="Glasner J.D."/>
            <person name="Rose D.J."/>
            <person name="Mayhew G.F."/>
            <person name="Evans P.S."/>
            <person name="Gregor J."/>
            <person name="Kirkpatrick H.A."/>
            <person name="Posfai G."/>
            <person name="Hackett J."/>
            <person name="Klink S."/>
            <person name="Boutin A."/>
            <person name="Shao Y."/>
            <person name="Miller L."/>
            <person name="Grotbeck E.J."/>
            <person name="Davis N.W."/>
            <person name="Lim A."/>
            <person name="Dimalanta E.T."/>
            <person name="Potamousis K."/>
            <person name="Apodaca J."/>
            <person name="Anantharaman T.S."/>
            <person name="Lin J."/>
            <person name="Yen G."/>
            <person name="Schwartz D.C."/>
            <person name="Welch R.A."/>
            <person name="Blattner F.R."/>
        </authorList>
    </citation>
    <scope>NUCLEOTIDE SEQUENCE [LARGE SCALE GENOMIC DNA]</scope>
    <source>
        <strain>O157:H7 / EDL933 / ATCC 700927 / EHEC</strain>
    </source>
</reference>
<reference key="2">
    <citation type="journal article" date="2001" name="DNA Res.">
        <title>Complete genome sequence of enterohemorrhagic Escherichia coli O157:H7 and genomic comparison with a laboratory strain K-12.</title>
        <authorList>
            <person name="Hayashi T."/>
            <person name="Makino K."/>
            <person name="Ohnishi M."/>
            <person name="Kurokawa K."/>
            <person name="Ishii K."/>
            <person name="Yokoyama K."/>
            <person name="Han C.-G."/>
            <person name="Ohtsubo E."/>
            <person name="Nakayama K."/>
            <person name="Murata T."/>
            <person name="Tanaka M."/>
            <person name="Tobe T."/>
            <person name="Iida T."/>
            <person name="Takami H."/>
            <person name="Honda T."/>
            <person name="Sasakawa C."/>
            <person name="Ogasawara N."/>
            <person name="Yasunaga T."/>
            <person name="Kuhara S."/>
            <person name="Shiba T."/>
            <person name="Hattori M."/>
            <person name="Shinagawa H."/>
        </authorList>
    </citation>
    <scope>NUCLEOTIDE SEQUENCE [LARGE SCALE GENOMIC DNA]</scope>
    <source>
        <strain>O157:H7 / Sakai / RIMD 0509952 / EHEC</strain>
    </source>
</reference>
<comment type="similarity">
    <text evidence="1">To H.influenzae HI_0845.</text>
</comment>
<evidence type="ECO:0000305" key="1"/>
<protein>
    <recommendedName>
        <fullName>Protein YihD</fullName>
    </recommendedName>
</protein>
<name>YIHD_ECO57</name>
<sequence>MKCKRLNEVIELLQPAWQKEPDLNLLQFLQKLAKESGFDGELADLTDDILIYHLKMRDSAKDAVIPGLQKDYEEDFKTALLRARGVIKE</sequence>
<feature type="chain" id="PRO_0000169671" description="Protein YihD">
    <location>
        <begin position="1"/>
        <end position="89"/>
    </location>
</feature>
<gene>
    <name type="primary">yihD</name>
    <name type="ordered locus">Z5390</name>
    <name type="ordered locus">ECs4781</name>
</gene>
<dbReference type="EMBL" id="AE005174">
    <property type="protein sequence ID" value="AAG59047.1"/>
    <property type="molecule type" value="Genomic_DNA"/>
</dbReference>
<dbReference type="EMBL" id="BA000007">
    <property type="protein sequence ID" value="BAB38204.1"/>
    <property type="molecule type" value="Genomic_DNA"/>
</dbReference>
<dbReference type="PIR" id="C86073">
    <property type="entry name" value="C86073"/>
</dbReference>
<dbReference type="PIR" id="E91226">
    <property type="entry name" value="E91226"/>
</dbReference>
<dbReference type="RefSeq" id="NP_312808.1">
    <property type="nucleotide sequence ID" value="NC_002695.1"/>
</dbReference>
<dbReference type="RefSeq" id="WP_001295263.1">
    <property type="nucleotide sequence ID" value="NZ_VOAI01000016.1"/>
</dbReference>
<dbReference type="BMRB" id="P0ADQ1"/>
<dbReference type="SMR" id="P0ADQ1"/>
<dbReference type="STRING" id="155864.Z5390"/>
<dbReference type="GeneID" id="915116"/>
<dbReference type="KEGG" id="ece:Z5390"/>
<dbReference type="KEGG" id="ecs:ECs_4781"/>
<dbReference type="PATRIC" id="fig|386585.9.peg.4990"/>
<dbReference type="eggNOG" id="COG3084">
    <property type="taxonomic scope" value="Bacteria"/>
</dbReference>
<dbReference type="HOGENOM" id="CLU_170339_0_0_6"/>
<dbReference type="OMA" id="PEWQKDQ"/>
<dbReference type="Proteomes" id="UP000000558">
    <property type="component" value="Chromosome"/>
</dbReference>
<dbReference type="Proteomes" id="UP000002519">
    <property type="component" value="Chromosome"/>
</dbReference>
<dbReference type="FunFam" id="1.10.1580.20:FF:000001">
    <property type="entry name" value="YihD family protein"/>
    <property type="match status" value="1"/>
</dbReference>
<dbReference type="Gene3D" id="1.10.1580.20">
    <property type="entry name" value="Protein of unknown function DUF1040"/>
    <property type="match status" value="1"/>
</dbReference>
<dbReference type="InterPro" id="IPR009383">
    <property type="entry name" value="DUF1040"/>
</dbReference>
<dbReference type="InterPro" id="IPR038134">
    <property type="entry name" value="YihD_sf"/>
</dbReference>
<dbReference type="Pfam" id="PF06288">
    <property type="entry name" value="DUF1040"/>
    <property type="match status" value="1"/>
</dbReference>
<keyword id="KW-1185">Reference proteome</keyword>
<accession>P0ADQ1</accession>
<accession>P32126</accession>
<organism>
    <name type="scientific">Escherichia coli O157:H7</name>
    <dbReference type="NCBI Taxonomy" id="83334"/>
    <lineage>
        <taxon>Bacteria</taxon>
        <taxon>Pseudomonadati</taxon>
        <taxon>Pseudomonadota</taxon>
        <taxon>Gammaproteobacteria</taxon>
        <taxon>Enterobacterales</taxon>
        <taxon>Enterobacteriaceae</taxon>
        <taxon>Escherichia</taxon>
    </lineage>
</organism>
<proteinExistence type="predicted"/>